<evidence type="ECO:0000255" key="1">
    <source>
        <dbReference type="HAMAP-Rule" id="MF_01693"/>
    </source>
</evidence>
<keyword id="KW-0093">Biotin biosynthesis</keyword>
<keyword id="KW-0663">Pyridoxal phosphate</keyword>
<keyword id="KW-0808">Transferase</keyword>
<comment type="function">
    <text evidence="1">Catalyzes the decarboxylative condensation of pimeloyl-[acyl-carrier protein] and L-alanine to produce 8-amino-7-oxononanoate (AON), [acyl-carrier protein], and carbon dioxide.</text>
</comment>
<comment type="catalytic activity">
    <reaction evidence="1">
        <text>6-carboxyhexanoyl-[ACP] + L-alanine + H(+) = (8S)-8-amino-7-oxononanoate + holo-[ACP] + CO2</text>
        <dbReference type="Rhea" id="RHEA:42288"/>
        <dbReference type="Rhea" id="RHEA-COMP:9685"/>
        <dbReference type="Rhea" id="RHEA-COMP:9955"/>
        <dbReference type="ChEBI" id="CHEBI:15378"/>
        <dbReference type="ChEBI" id="CHEBI:16526"/>
        <dbReference type="ChEBI" id="CHEBI:57972"/>
        <dbReference type="ChEBI" id="CHEBI:64479"/>
        <dbReference type="ChEBI" id="CHEBI:78846"/>
        <dbReference type="ChEBI" id="CHEBI:149468"/>
        <dbReference type="EC" id="2.3.1.47"/>
    </reaction>
</comment>
<comment type="cofactor">
    <cofactor evidence="1">
        <name>pyridoxal 5'-phosphate</name>
        <dbReference type="ChEBI" id="CHEBI:597326"/>
    </cofactor>
</comment>
<comment type="pathway">
    <text evidence="1">Cofactor biosynthesis; biotin biosynthesis.</text>
</comment>
<comment type="subunit">
    <text evidence="1">Homodimer.</text>
</comment>
<comment type="similarity">
    <text evidence="1">Belongs to the class-II pyridoxal-phosphate-dependent aminotransferase family. BioF subfamily.</text>
</comment>
<name>BIOF_VIBVU</name>
<accession>Q8D8N0</accession>
<reference key="1">
    <citation type="submission" date="2002-12" db="EMBL/GenBank/DDBJ databases">
        <title>Complete genome sequence of Vibrio vulnificus CMCP6.</title>
        <authorList>
            <person name="Rhee J.H."/>
            <person name="Kim S.Y."/>
            <person name="Chung S.S."/>
            <person name="Kim J.J."/>
            <person name="Moon Y.H."/>
            <person name="Jeong H."/>
            <person name="Choy H.E."/>
        </authorList>
    </citation>
    <scope>NUCLEOTIDE SEQUENCE [LARGE SCALE GENOMIC DNA]</scope>
    <source>
        <strain>CMCP6</strain>
    </source>
</reference>
<feature type="chain" id="PRO_0000381138" description="8-amino-7-oxononanoate synthase">
    <location>
        <begin position="1"/>
        <end position="385"/>
    </location>
</feature>
<feature type="binding site" evidence="1">
    <location>
        <position position="23"/>
    </location>
    <ligand>
        <name>substrate</name>
    </ligand>
</feature>
<feature type="binding site" evidence="1">
    <location>
        <begin position="110"/>
        <end position="111"/>
    </location>
    <ligand>
        <name>pyridoxal 5'-phosphate</name>
        <dbReference type="ChEBI" id="CHEBI:597326"/>
    </ligand>
</feature>
<feature type="binding site" evidence="1">
    <location>
        <position position="135"/>
    </location>
    <ligand>
        <name>substrate</name>
    </ligand>
</feature>
<feature type="binding site" evidence="1">
    <location>
        <position position="180"/>
    </location>
    <ligand>
        <name>pyridoxal 5'-phosphate</name>
        <dbReference type="ChEBI" id="CHEBI:597326"/>
    </ligand>
</feature>
<feature type="binding site" evidence="1">
    <location>
        <position position="208"/>
    </location>
    <ligand>
        <name>pyridoxal 5'-phosphate</name>
        <dbReference type="ChEBI" id="CHEBI:597326"/>
    </ligand>
</feature>
<feature type="binding site" evidence="1">
    <location>
        <position position="234"/>
    </location>
    <ligand>
        <name>pyridoxal 5'-phosphate</name>
        <dbReference type="ChEBI" id="CHEBI:597326"/>
    </ligand>
</feature>
<feature type="binding site" evidence="1">
    <location>
        <position position="350"/>
    </location>
    <ligand>
        <name>substrate</name>
    </ligand>
</feature>
<feature type="modified residue" description="N6-(pyridoxal phosphate)lysine" evidence="1">
    <location>
        <position position="237"/>
    </location>
</feature>
<protein>
    <recommendedName>
        <fullName evidence="1">8-amino-7-oxononanoate synthase</fullName>
        <shortName evidence="1">AONS</shortName>
        <ecNumber evidence="1">2.3.1.47</ecNumber>
    </recommendedName>
    <alternativeName>
        <fullName evidence="1">7-keto-8-amino-pelargonic acid synthase</fullName>
        <shortName evidence="1">7-KAP synthase</shortName>
        <shortName evidence="1">KAPA synthase</shortName>
    </alternativeName>
    <alternativeName>
        <fullName evidence="1">8-amino-7-ketopelargonate synthase</fullName>
    </alternativeName>
</protein>
<sequence>MTQAFNERIAQALKQRREQGLSRQSEVIFSGNQTVLEHQGKRYLNFSANDYLGLANDQSLVRAWQQGLSLYGCGSGASPLVTGYTPAHSNLAASLCDWLGYESATLFGSGFSANQALLFALLEKGDLLVQDKLNHASLIEAGLLSPATMKRFKHNDLKALDTILNRSDCPSLVVTEGVFSMDGDCSPLAEMHALTQRHSASLMVDDAHGVGVLGEEGRGSCALASVKPDFLVVTFGKAFGLSGAALLTDKSSGDFLAQFARHHVYSTALPPAQAFALTHAVEMIRTQQWRRDKLNELQTLFAEYLGEHDSFVATQTPIKPWLIGETQQAVMVAQRCREQGIWLTAIRPPTVPQNTARLRITLSANHTKEQMHTLAQVLLTVTGEH</sequence>
<dbReference type="EC" id="2.3.1.47" evidence="1"/>
<dbReference type="EMBL" id="AE016795">
    <property type="protein sequence ID" value="AAO11273.1"/>
    <property type="molecule type" value="Genomic_DNA"/>
</dbReference>
<dbReference type="RefSeq" id="WP_011080760.1">
    <property type="nucleotide sequence ID" value="NC_004459.3"/>
</dbReference>
<dbReference type="SMR" id="Q8D8N0"/>
<dbReference type="KEGG" id="vvu:VV1_2942"/>
<dbReference type="HOGENOM" id="CLU_015846_11_2_6"/>
<dbReference type="UniPathway" id="UPA00078"/>
<dbReference type="Proteomes" id="UP000002275">
    <property type="component" value="Chromosome 1"/>
</dbReference>
<dbReference type="GO" id="GO:0008710">
    <property type="term" value="F:8-amino-7-oxononanoate synthase activity"/>
    <property type="evidence" value="ECO:0007669"/>
    <property type="project" value="UniProtKB-UniRule"/>
</dbReference>
<dbReference type="GO" id="GO:0030170">
    <property type="term" value="F:pyridoxal phosphate binding"/>
    <property type="evidence" value="ECO:0007669"/>
    <property type="project" value="UniProtKB-UniRule"/>
</dbReference>
<dbReference type="GO" id="GO:0009102">
    <property type="term" value="P:biotin biosynthetic process"/>
    <property type="evidence" value="ECO:0007669"/>
    <property type="project" value="UniProtKB-UniRule"/>
</dbReference>
<dbReference type="Gene3D" id="3.90.1150.10">
    <property type="entry name" value="Aspartate Aminotransferase, domain 1"/>
    <property type="match status" value="1"/>
</dbReference>
<dbReference type="Gene3D" id="3.40.640.10">
    <property type="entry name" value="Type I PLP-dependent aspartate aminotransferase-like (Major domain)"/>
    <property type="match status" value="1"/>
</dbReference>
<dbReference type="HAMAP" id="MF_01693">
    <property type="entry name" value="BioF_aminotrans_2"/>
    <property type="match status" value="1"/>
</dbReference>
<dbReference type="InterPro" id="IPR004839">
    <property type="entry name" value="Aminotransferase_I/II_large"/>
</dbReference>
<dbReference type="InterPro" id="IPR050087">
    <property type="entry name" value="AON_synthase_class-II"/>
</dbReference>
<dbReference type="InterPro" id="IPR004723">
    <property type="entry name" value="AONS_Archaea/Proteobacteria"/>
</dbReference>
<dbReference type="InterPro" id="IPR022834">
    <property type="entry name" value="AONS_Proteobacteria"/>
</dbReference>
<dbReference type="InterPro" id="IPR015424">
    <property type="entry name" value="PyrdxlP-dep_Trfase"/>
</dbReference>
<dbReference type="InterPro" id="IPR015421">
    <property type="entry name" value="PyrdxlP-dep_Trfase_major"/>
</dbReference>
<dbReference type="InterPro" id="IPR015422">
    <property type="entry name" value="PyrdxlP-dep_Trfase_small"/>
</dbReference>
<dbReference type="NCBIfam" id="TIGR00858">
    <property type="entry name" value="bioF"/>
    <property type="match status" value="1"/>
</dbReference>
<dbReference type="PANTHER" id="PTHR13693:SF100">
    <property type="entry name" value="8-AMINO-7-OXONONANOATE SYNTHASE"/>
    <property type="match status" value="1"/>
</dbReference>
<dbReference type="PANTHER" id="PTHR13693">
    <property type="entry name" value="CLASS II AMINOTRANSFERASE/8-AMINO-7-OXONONANOATE SYNTHASE"/>
    <property type="match status" value="1"/>
</dbReference>
<dbReference type="Pfam" id="PF00155">
    <property type="entry name" value="Aminotran_1_2"/>
    <property type="match status" value="1"/>
</dbReference>
<dbReference type="SUPFAM" id="SSF53383">
    <property type="entry name" value="PLP-dependent transferases"/>
    <property type="match status" value="1"/>
</dbReference>
<dbReference type="PROSITE" id="PS00599">
    <property type="entry name" value="AA_TRANSFER_CLASS_2"/>
    <property type="match status" value="1"/>
</dbReference>
<organism>
    <name type="scientific">Vibrio vulnificus (strain CMCP6)</name>
    <dbReference type="NCBI Taxonomy" id="216895"/>
    <lineage>
        <taxon>Bacteria</taxon>
        <taxon>Pseudomonadati</taxon>
        <taxon>Pseudomonadota</taxon>
        <taxon>Gammaproteobacteria</taxon>
        <taxon>Vibrionales</taxon>
        <taxon>Vibrionaceae</taxon>
        <taxon>Vibrio</taxon>
    </lineage>
</organism>
<proteinExistence type="inferred from homology"/>
<gene>
    <name evidence="1" type="primary">bioF</name>
    <name type="ordered locus">VV1_2942</name>
</gene>